<sequence length="85" mass="9856">MRTAYWVMVMMMVGITAPLSEGRKLNDAIRGLVADYLTPQLLQSLVSAPYPEFQLDDPNLEIPVCIWKVCPPIPWRRRDLKKRNK</sequence>
<organism>
    <name type="scientific">Conus litteratus</name>
    <name type="common">Lettered cone</name>
    <dbReference type="NCBI Taxonomy" id="89445"/>
    <lineage>
        <taxon>Eukaryota</taxon>
        <taxon>Metazoa</taxon>
        <taxon>Spiralia</taxon>
        <taxon>Lophotrochozoa</taxon>
        <taxon>Mollusca</taxon>
        <taxon>Gastropoda</taxon>
        <taxon>Caenogastropoda</taxon>
        <taxon>Neogastropoda</taxon>
        <taxon>Conoidea</taxon>
        <taxon>Conidae</taxon>
        <taxon>Conus</taxon>
        <taxon>Elisaconus</taxon>
    </lineage>
</organism>
<feature type="signal peptide" evidence="2">
    <location>
        <begin position="1"/>
        <end position="22"/>
    </location>
</feature>
<feature type="propeptide" id="PRO_0000315411" evidence="3">
    <location>
        <begin position="23"/>
        <end position="60"/>
    </location>
</feature>
<feature type="peptide" id="PRO_0000315412" description="Contulakin-Lt1">
    <location>
        <begin position="61"/>
        <end position="75"/>
    </location>
</feature>
<feature type="propeptide" id="PRO_0000315413" evidence="1">
    <location>
        <begin position="76"/>
        <end position="85"/>
    </location>
</feature>
<feature type="disulfide bond" evidence="3">
    <location>
        <begin position="65"/>
        <end position="70"/>
    </location>
</feature>
<accession>Q2I2P1</accession>
<comment type="function">
    <text evidence="1">Acts as an agonist of neurotensin receptors. It binds to human neurotensin type 1 receptor (NTSR1), rat neurotensin types 1 and 2 receptors (NTSR1/NTSR2) and mouse neurotensin type 3 receptor (SORT1) (By similarity).</text>
</comment>
<comment type="subcellular location">
    <subcellularLocation>
        <location evidence="1">Secreted</location>
    </subcellularLocation>
</comment>
<comment type="tissue specificity">
    <text>Expressed by the venom duct.</text>
</comment>
<comment type="domain">
    <text>The cysteine framework is C-C.</text>
</comment>
<comment type="similarity">
    <text evidence="3">Belongs to the conotoxin C superfamily.</text>
</comment>
<reference key="1">
    <citation type="journal article" date="2006" name="Genomics">
        <title>Diversity and evolution of conotoxins based on gene expression profiling of Conus litteratus.</title>
        <authorList>
            <person name="Pi C."/>
            <person name="Liu J."/>
            <person name="Peng C."/>
            <person name="Liu Y."/>
            <person name="Jiang X."/>
            <person name="Zhao Y."/>
            <person name="Tang S."/>
            <person name="Wang L."/>
            <person name="Dong M."/>
            <person name="Chen S."/>
            <person name="Xu A."/>
        </authorList>
    </citation>
    <scope>NUCLEOTIDE SEQUENCE [MRNA]</scope>
    <source>
        <tissue>Venom duct</tissue>
    </source>
</reference>
<evidence type="ECO:0000250" key="1"/>
<evidence type="ECO:0000255" key="2"/>
<evidence type="ECO:0000305" key="3"/>
<name>CON1_CONLT</name>
<keyword id="KW-0165">Cleavage on pair of basic residues</keyword>
<keyword id="KW-1015">Disulfide bond</keyword>
<keyword id="KW-1213">G-protein coupled receptor impairing toxin</keyword>
<keyword id="KW-0528">Neurotoxin</keyword>
<keyword id="KW-0964">Secreted</keyword>
<keyword id="KW-0732">Signal</keyword>
<keyword id="KW-0800">Toxin</keyword>
<protein>
    <recommendedName>
        <fullName>Contulakin-Lt1</fullName>
    </recommendedName>
</protein>
<dbReference type="EMBL" id="DQ345391">
    <property type="protein sequence ID" value="ABC74999.1"/>
    <property type="molecule type" value="mRNA"/>
</dbReference>
<dbReference type="TCDB" id="8.B.36.1.1">
    <property type="family name" value="the contulakin lt (contulakin lt) family"/>
</dbReference>
<dbReference type="ConoServer" id="1177">
    <property type="toxin name" value="Contulakin-Lt1 precursor"/>
</dbReference>
<dbReference type="GO" id="GO:0005576">
    <property type="term" value="C:extracellular region"/>
    <property type="evidence" value="ECO:0007669"/>
    <property type="project" value="UniProtKB-SubCell"/>
</dbReference>
<dbReference type="GO" id="GO:0090729">
    <property type="term" value="F:toxin activity"/>
    <property type="evidence" value="ECO:0007669"/>
    <property type="project" value="UniProtKB-KW"/>
</dbReference>
<proteinExistence type="evidence at transcript level"/>